<dbReference type="EMBL" id="AJ235273">
    <property type="protein sequence ID" value="CAA15156.1"/>
    <property type="molecule type" value="Genomic_DNA"/>
</dbReference>
<dbReference type="PIR" id="D71632">
    <property type="entry name" value="D71632"/>
</dbReference>
<dbReference type="RefSeq" id="NP_221080.1">
    <property type="nucleotide sequence ID" value="NC_000963.1"/>
</dbReference>
<dbReference type="RefSeq" id="WP_004597048.1">
    <property type="nucleotide sequence ID" value="NC_000963.1"/>
</dbReference>
<dbReference type="SMR" id="Q9ZCK4"/>
<dbReference type="STRING" id="272947.gene:17555797"/>
<dbReference type="EnsemblBacteria" id="CAA15156">
    <property type="protein sequence ID" value="CAA15156"/>
    <property type="gene ID" value="CAA15156"/>
</dbReference>
<dbReference type="KEGG" id="rpr:RP725"/>
<dbReference type="PATRIC" id="fig|272947.5.peg.761"/>
<dbReference type="eggNOG" id="COG3761">
    <property type="taxonomic scope" value="Bacteria"/>
</dbReference>
<dbReference type="HOGENOM" id="CLU_148024_0_0_5"/>
<dbReference type="OrthoDB" id="9795340at2"/>
<dbReference type="Proteomes" id="UP000002480">
    <property type="component" value="Chromosome"/>
</dbReference>
<dbReference type="GO" id="GO:0045271">
    <property type="term" value="C:respiratory chain complex I"/>
    <property type="evidence" value="ECO:0007669"/>
    <property type="project" value="InterPro"/>
</dbReference>
<dbReference type="GO" id="GO:0006979">
    <property type="term" value="P:response to oxidative stress"/>
    <property type="evidence" value="ECO:0007669"/>
    <property type="project" value="TreeGrafter"/>
</dbReference>
<dbReference type="InterPro" id="IPR007763">
    <property type="entry name" value="NDUFA12"/>
</dbReference>
<dbReference type="NCBIfam" id="NF005151">
    <property type="entry name" value="PRK06630.1"/>
    <property type="match status" value="1"/>
</dbReference>
<dbReference type="PANTHER" id="PTHR12910:SF2">
    <property type="entry name" value="NADH DEHYDROGENASE [UBIQUINONE] 1 ALPHA SUBCOMPLEX SUBUNIT 12"/>
    <property type="match status" value="1"/>
</dbReference>
<dbReference type="PANTHER" id="PTHR12910">
    <property type="entry name" value="NADH-UBIQUINONE OXIDOREDUCTASE SUBUNIT B17.2"/>
    <property type="match status" value="1"/>
</dbReference>
<dbReference type="Pfam" id="PF05071">
    <property type="entry name" value="NDUFA12"/>
    <property type="match status" value="1"/>
</dbReference>
<accession>Q9ZCK4</accession>
<feature type="chain" id="PRO_0000101413" description="Uncharacterized protein RP725">
    <location>
        <begin position="1"/>
        <end position="100"/>
    </location>
</feature>
<keyword id="KW-1185">Reference proteome</keyword>
<protein>
    <recommendedName>
        <fullName>Uncharacterized protein RP725</fullName>
    </recommendedName>
</protein>
<sequence>MSWIDKFFITFFYTKVGEDEFLNQYYESRNNIDYLGRSRRCVIYKNINESTKIPPSWYSWLHHLVNEIPKNVQLFPWQQNNKITKKLPKTSNLKYNRWQP</sequence>
<reference key="1">
    <citation type="journal article" date="1998" name="Nature">
        <title>The genome sequence of Rickettsia prowazekii and the origin of mitochondria.</title>
        <authorList>
            <person name="Andersson S.G.E."/>
            <person name="Zomorodipour A."/>
            <person name="Andersson J.O."/>
            <person name="Sicheritz-Ponten T."/>
            <person name="Alsmark U.C.M."/>
            <person name="Podowski R.M."/>
            <person name="Naeslund A.K."/>
            <person name="Eriksson A.-S."/>
            <person name="Winkler H.H."/>
            <person name="Kurland C.G."/>
        </authorList>
    </citation>
    <scope>NUCLEOTIDE SEQUENCE [LARGE SCALE GENOMIC DNA]</scope>
    <source>
        <strain>Madrid E</strain>
    </source>
</reference>
<name>Y725_RICPR</name>
<proteinExistence type="predicted"/>
<gene>
    <name type="ordered locus">RP725</name>
</gene>
<organism>
    <name type="scientific">Rickettsia prowazekii (strain Madrid E)</name>
    <dbReference type="NCBI Taxonomy" id="272947"/>
    <lineage>
        <taxon>Bacteria</taxon>
        <taxon>Pseudomonadati</taxon>
        <taxon>Pseudomonadota</taxon>
        <taxon>Alphaproteobacteria</taxon>
        <taxon>Rickettsiales</taxon>
        <taxon>Rickettsiaceae</taxon>
        <taxon>Rickettsieae</taxon>
        <taxon>Rickettsia</taxon>
        <taxon>typhus group</taxon>
    </lineage>
</organism>